<dbReference type="EC" id="2.1.2.11" evidence="1"/>
<dbReference type="EMBL" id="CP001176">
    <property type="protein sequence ID" value="ACK61087.1"/>
    <property type="molecule type" value="Genomic_DNA"/>
</dbReference>
<dbReference type="RefSeq" id="WP_000851110.1">
    <property type="nucleotide sequence ID" value="NC_011725.1"/>
</dbReference>
<dbReference type="SMR" id="B7HHU3"/>
<dbReference type="KEGG" id="bcb:BCB4264_A1595"/>
<dbReference type="HOGENOM" id="CLU_036645_1_0_9"/>
<dbReference type="UniPathway" id="UPA00028">
    <property type="reaction ID" value="UER00003"/>
</dbReference>
<dbReference type="Proteomes" id="UP000007096">
    <property type="component" value="Chromosome"/>
</dbReference>
<dbReference type="GO" id="GO:0005737">
    <property type="term" value="C:cytoplasm"/>
    <property type="evidence" value="ECO:0007669"/>
    <property type="project" value="UniProtKB-SubCell"/>
</dbReference>
<dbReference type="GO" id="GO:0003864">
    <property type="term" value="F:3-methyl-2-oxobutanoate hydroxymethyltransferase activity"/>
    <property type="evidence" value="ECO:0007669"/>
    <property type="project" value="UniProtKB-UniRule"/>
</dbReference>
<dbReference type="GO" id="GO:0000287">
    <property type="term" value="F:magnesium ion binding"/>
    <property type="evidence" value="ECO:0007669"/>
    <property type="project" value="TreeGrafter"/>
</dbReference>
<dbReference type="GO" id="GO:0015940">
    <property type="term" value="P:pantothenate biosynthetic process"/>
    <property type="evidence" value="ECO:0007669"/>
    <property type="project" value="UniProtKB-UniRule"/>
</dbReference>
<dbReference type="CDD" id="cd06557">
    <property type="entry name" value="KPHMT-like"/>
    <property type="match status" value="1"/>
</dbReference>
<dbReference type="FunFam" id="3.20.20.60:FF:000003">
    <property type="entry name" value="3-methyl-2-oxobutanoate hydroxymethyltransferase"/>
    <property type="match status" value="1"/>
</dbReference>
<dbReference type="Gene3D" id="3.20.20.60">
    <property type="entry name" value="Phosphoenolpyruvate-binding domains"/>
    <property type="match status" value="1"/>
</dbReference>
<dbReference type="HAMAP" id="MF_00156">
    <property type="entry name" value="PanB"/>
    <property type="match status" value="1"/>
</dbReference>
<dbReference type="InterPro" id="IPR003700">
    <property type="entry name" value="Pantoate_hydroxy_MeTrfase"/>
</dbReference>
<dbReference type="InterPro" id="IPR015813">
    <property type="entry name" value="Pyrv/PenolPyrv_kinase-like_dom"/>
</dbReference>
<dbReference type="InterPro" id="IPR040442">
    <property type="entry name" value="Pyrv_kinase-like_dom_sf"/>
</dbReference>
<dbReference type="NCBIfam" id="TIGR00222">
    <property type="entry name" value="panB"/>
    <property type="match status" value="1"/>
</dbReference>
<dbReference type="NCBIfam" id="NF001452">
    <property type="entry name" value="PRK00311.1"/>
    <property type="match status" value="1"/>
</dbReference>
<dbReference type="PANTHER" id="PTHR20881">
    <property type="entry name" value="3-METHYL-2-OXOBUTANOATE HYDROXYMETHYLTRANSFERASE"/>
    <property type="match status" value="1"/>
</dbReference>
<dbReference type="PANTHER" id="PTHR20881:SF0">
    <property type="entry name" value="3-METHYL-2-OXOBUTANOATE HYDROXYMETHYLTRANSFERASE"/>
    <property type="match status" value="1"/>
</dbReference>
<dbReference type="Pfam" id="PF02548">
    <property type="entry name" value="Pantoate_transf"/>
    <property type="match status" value="1"/>
</dbReference>
<dbReference type="PIRSF" id="PIRSF000388">
    <property type="entry name" value="Pantoate_hydroxy_MeTrfase"/>
    <property type="match status" value="1"/>
</dbReference>
<dbReference type="SUPFAM" id="SSF51621">
    <property type="entry name" value="Phosphoenolpyruvate/pyruvate domain"/>
    <property type="match status" value="1"/>
</dbReference>
<accession>B7HHU3</accession>
<keyword id="KW-0963">Cytoplasm</keyword>
<keyword id="KW-0460">Magnesium</keyword>
<keyword id="KW-0479">Metal-binding</keyword>
<keyword id="KW-0566">Pantothenate biosynthesis</keyword>
<keyword id="KW-0808">Transferase</keyword>
<organism>
    <name type="scientific">Bacillus cereus (strain B4264)</name>
    <dbReference type="NCBI Taxonomy" id="405532"/>
    <lineage>
        <taxon>Bacteria</taxon>
        <taxon>Bacillati</taxon>
        <taxon>Bacillota</taxon>
        <taxon>Bacilli</taxon>
        <taxon>Bacillales</taxon>
        <taxon>Bacillaceae</taxon>
        <taxon>Bacillus</taxon>
        <taxon>Bacillus cereus group</taxon>
    </lineage>
</organism>
<name>PANB_BACC4</name>
<gene>
    <name evidence="1" type="primary">panB</name>
    <name type="ordered locus">BCB4264_A1595</name>
</gene>
<protein>
    <recommendedName>
        <fullName evidence="1">3-methyl-2-oxobutanoate hydroxymethyltransferase</fullName>
        <ecNumber evidence="1">2.1.2.11</ecNumber>
    </recommendedName>
    <alternativeName>
        <fullName evidence="1">Ketopantoate hydroxymethyltransferase</fullName>
        <shortName evidence="1">KPHMT</shortName>
    </alternativeName>
</protein>
<evidence type="ECO:0000255" key="1">
    <source>
        <dbReference type="HAMAP-Rule" id="MF_00156"/>
    </source>
</evidence>
<comment type="function">
    <text evidence="1">Catalyzes the reversible reaction in which hydroxymethyl group from 5,10-methylenetetrahydrofolate is transferred onto alpha-ketoisovalerate to form ketopantoate.</text>
</comment>
<comment type="catalytic activity">
    <reaction evidence="1">
        <text>3-methyl-2-oxobutanoate + (6R)-5,10-methylene-5,6,7,8-tetrahydrofolate + H2O = 2-dehydropantoate + (6S)-5,6,7,8-tetrahydrofolate</text>
        <dbReference type="Rhea" id="RHEA:11824"/>
        <dbReference type="ChEBI" id="CHEBI:11561"/>
        <dbReference type="ChEBI" id="CHEBI:11851"/>
        <dbReference type="ChEBI" id="CHEBI:15377"/>
        <dbReference type="ChEBI" id="CHEBI:15636"/>
        <dbReference type="ChEBI" id="CHEBI:57453"/>
        <dbReference type="EC" id="2.1.2.11"/>
    </reaction>
</comment>
<comment type="cofactor">
    <cofactor evidence="1">
        <name>Mg(2+)</name>
        <dbReference type="ChEBI" id="CHEBI:18420"/>
    </cofactor>
    <text evidence="1">Binds 1 Mg(2+) ion per subunit.</text>
</comment>
<comment type="pathway">
    <text evidence="1">Cofactor biosynthesis; (R)-pantothenate biosynthesis; (R)-pantoate from 3-methyl-2-oxobutanoate: step 1/2.</text>
</comment>
<comment type="subunit">
    <text evidence="1">Homodecamer; pentamer of dimers.</text>
</comment>
<comment type="subcellular location">
    <subcellularLocation>
        <location evidence="1">Cytoplasm</location>
    </subcellularLocation>
</comment>
<comment type="similarity">
    <text evidence="1">Belongs to the PanB family.</text>
</comment>
<feature type="chain" id="PRO_1000118116" description="3-methyl-2-oxobutanoate hydroxymethyltransferase">
    <location>
        <begin position="1"/>
        <end position="278"/>
    </location>
</feature>
<feature type="active site" description="Proton acceptor" evidence="1">
    <location>
        <position position="181"/>
    </location>
</feature>
<feature type="binding site" evidence="1">
    <location>
        <begin position="43"/>
        <end position="44"/>
    </location>
    <ligand>
        <name>3-methyl-2-oxobutanoate</name>
        <dbReference type="ChEBI" id="CHEBI:11851"/>
    </ligand>
</feature>
<feature type="binding site" evidence="1">
    <location>
        <position position="43"/>
    </location>
    <ligand>
        <name>Mg(2+)</name>
        <dbReference type="ChEBI" id="CHEBI:18420"/>
    </ligand>
</feature>
<feature type="binding site" evidence="1">
    <location>
        <position position="82"/>
    </location>
    <ligand>
        <name>3-methyl-2-oxobutanoate</name>
        <dbReference type="ChEBI" id="CHEBI:11851"/>
    </ligand>
</feature>
<feature type="binding site" evidence="1">
    <location>
        <position position="82"/>
    </location>
    <ligand>
        <name>Mg(2+)</name>
        <dbReference type="ChEBI" id="CHEBI:18420"/>
    </ligand>
</feature>
<feature type="binding site" evidence="1">
    <location>
        <position position="112"/>
    </location>
    <ligand>
        <name>3-methyl-2-oxobutanoate</name>
        <dbReference type="ChEBI" id="CHEBI:11851"/>
    </ligand>
</feature>
<feature type="binding site" evidence="1">
    <location>
        <position position="114"/>
    </location>
    <ligand>
        <name>Mg(2+)</name>
        <dbReference type="ChEBI" id="CHEBI:18420"/>
    </ligand>
</feature>
<proteinExistence type="inferred from homology"/>
<sequence>MKTKTDFLKMKEQGEPITMLTAYDYPSAKLAEEAEVDMILVGDSLGMVVLGYDSTVPVTVEDMIHHTKAVRRGAKETFIVTDMPFMSYHVSLQETMVNARRIVQESGAHALKVEGAGEVISTIQYLTNAGIPVVAHLGLTPQSVGVLGGYKVQGKDAESAKKLIEDAKKCEEAGAIALVLECVPMQLAELISEQLTIPTIGIGAGQKVDGQVLVYHDLISYGVNRVPKFVKQYTSVQEEIVRGISQYVTEVKTRQFPEEKHSFTMKEEECLVLYGGKQ</sequence>
<reference key="1">
    <citation type="submission" date="2008-10" db="EMBL/GenBank/DDBJ databases">
        <title>Genome sequence of Bacillus cereus B4264.</title>
        <authorList>
            <person name="Dodson R.J."/>
            <person name="Durkin A.S."/>
            <person name="Rosovitz M.J."/>
            <person name="Rasko D.A."/>
            <person name="Hoffmaster A."/>
            <person name="Ravel J."/>
            <person name="Sutton G."/>
        </authorList>
    </citation>
    <scope>NUCLEOTIDE SEQUENCE [LARGE SCALE GENOMIC DNA]</scope>
    <source>
        <strain>B4264</strain>
    </source>
</reference>